<reference key="1">
    <citation type="submission" date="2009-03" db="EMBL/GenBank/DDBJ databases">
        <title>Comparison of the complete genome sequences of Rhodococcus erythropolis PR4 and Rhodococcus opacus B4.</title>
        <authorList>
            <person name="Takarada H."/>
            <person name="Sekine M."/>
            <person name="Hosoyama A."/>
            <person name="Yamada R."/>
            <person name="Fujisawa T."/>
            <person name="Omata S."/>
            <person name="Shimizu A."/>
            <person name="Tsukatani N."/>
            <person name="Tanikawa S."/>
            <person name="Fujita N."/>
            <person name="Harayama S."/>
        </authorList>
    </citation>
    <scope>NUCLEOTIDE SEQUENCE [LARGE SCALE GENOMIC DNA]</scope>
    <source>
        <strain>B4</strain>
    </source>
</reference>
<comment type="catalytic activity">
    <reaction evidence="1">
        <text>1-(2-carboxyphenylamino)-1-deoxy-D-ribulose 5-phosphate + H(+) = (1S,2R)-1-C-(indol-3-yl)glycerol 3-phosphate + CO2 + H2O</text>
        <dbReference type="Rhea" id="RHEA:23476"/>
        <dbReference type="ChEBI" id="CHEBI:15377"/>
        <dbReference type="ChEBI" id="CHEBI:15378"/>
        <dbReference type="ChEBI" id="CHEBI:16526"/>
        <dbReference type="ChEBI" id="CHEBI:58613"/>
        <dbReference type="ChEBI" id="CHEBI:58866"/>
        <dbReference type="EC" id="4.1.1.48"/>
    </reaction>
</comment>
<comment type="pathway">
    <text evidence="1">Amino-acid biosynthesis; L-tryptophan biosynthesis; L-tryptophan from chorismate: step 4/5.</text>
</comment>
<comment type="similarity">
    <text evidence="1">Belongs to the TrpC family.</text>
</comment>
<sequence>MTVLDSILDGVRADVAAREAVLDFAAVKAAAAAAPPALDAAAALLEPGIGVIAEVKRASPSKGALADIADPAELAAAYQAGGARVISVLTEERRFQGSLADLDAVRRAVSIPILRKDFIVGPYQIHEARAHGADMVLLIVAALEQDALASLIDRTESLGMTALVEVHTEEEANRAIEAGAKVIGVNARNLKTLEVDKNTFGEIAPGLPTEIIKIAESGVRGTADLLAYAGAGADAVLVGEGLVTSGDPRKAVADLVNAGAHPSCPKPSR</sequence>
<name>TRPC_RHOOB</name>
<organism>
    <name type="scientific">Rhodococcus opacus (strain B4)</name>
    <dbReference type="NCBI Taxonomy" id="632772"/>
    <lineage>
        <taxon>Bacteria</taxon>
        <taxon>Bacillati</taxon>
        <taxon>Actinomycetota</taxon>
        <taxon>Actinomycetes</taxon>
        <taxon>Mycobacteriales</taxon>
        <taxon>Nocardiaceae</taxon>
        <taxon>Rhodococcus</taxon>
    </lineage>
</organism>
<proteinExistence type="inferred from homology"/>
<protein>
    <recommendedName>
        <fullName evidence="1">Indole-3-glycerol phosphate synthase</fullName>
        <shortName evidence="1">IGPS</shortName>
        <ecNumber evidence="1">4.1.1.48</ecNumber>
    </recommendedName>
</protein>
<evidence type="ECO:0000255" key="1">
    <source>
        <dbReference type="HAMAP-Rule" id="MF_00134"/>
    </source>
</evidence>
<dbReference type="EC" id="4.1.1.48" evidence="1"/>
<dbReference type="EMBL" id="AP011115">
    <property type="protein sequence ID" value="BAH48987.1"/>
    <property type="molecule type" value="Genomic_DNA"/>
</dbReference>
<dbReference type="RefSeq" id="WP_012687986.1">
    <property type="nucleotide sequence ID" value="NC_012522.1"/>
</dbReference>
<dbReference type="SMR" id="C1AT55"/>
<dbReference type="STRING" id="632772.ROP_07400"/>
<dbReference type="KEGG" id="rop:ROP_07400"/>
<dbReference type="PATRIC" id="fig|632772.20.peg.803"/>
<dbReference type="HOGENOM" id="CLU_034247_0_0_11"/>
<dbReference type="OrthoDB" id="9804217at2"/>
<dbReference type="UniPathway" id="UPA00035">
    <property type="reaction ID" value="UER00043"/>
</dbReference>
<dbReference type="Proteomes" id="UP000002212">
    <property type="component" value="Chromosome"/>
</dbReference>
<dbReference type="GO" id="GO:0004425">
    <property type="term" value="F:indole-3-glycerol-phosphate synthase activity"/>
    <property type="evidence" value="ECO:0007669"/>
    <property type="project" value="UniProtKB-UniRule"/>
</dbReference>
<dbReference type="GO" id="GO:0004640">
    <property type="term" value="F:phosphoribosylanthranilate isomerase activity"/>
    <property type="evidence" value="ECO:0007669"/>
    <property type="project" value="TreeGrafter"/>
</dbReference>
<dbReference type="GO" id="GO:0000162">
    <property type="term" value="P:L-tryptophan biosynthetic process"/>
    <property type="evidence" value="ECO:0007669"/>
    <property type="project" value="UniProtKB-UniRule"/>
</dbReference>
<dbReference type="CDD" id="cd00331">
    <property type="entry name" value="IGPS"/>
    <property type="match status" value="1"/>
</dbReference>
<dbReference type="FunFam" id="3.20.20.70:FF:000024">
    <property type="entry name" value="Indole-3-glycerol phosphate synthase"/>
    <property type="match status" value="1"/>
</dbReference>
<dbReference type="Gene3D" id="3.20.20.70">
    <property type="entry name" value="Aldolase class I"/>
    <property type="match status" value="1"/>
</dbReference>
<dbReference type="HAMAP" id="MF_00134_A">
    <property type="entry name" value="IGPS_A"/>
    <property type="match status" value="1"/>
</dbReference>
<dbReference type="HAMAP" id="MF_00134_B">
    <property type="entry name" value="IGPS_B"/>
    <property type="match status" value="1"/>
</dbReference>
<dbReference type="InterPro" id="IPR013785">
    <property type="entry name" value="Aldolase_TIM"/>
</dbReference>
<dbReference type="InterPro" id="IPR045186">
    <property type="entry name" value="Indole-3-glycerol_P_synth"/>
</dbReference>
<dbReference type="InterPro" id="IPR013798">
    <property type="entry name" value="Indole-3-glycerol_P_synth_dom"/>
</dbReference>
<dbReference type="InterPro" id="IPR001468">
    <property type="entry name" value="Indole-3-GlycerolPSynthase_CS"/>
</dbReference>
<dbReference type="InterPro" id="IPR011060">
    <property type="entry name" value="RibuloseP-bd_barrel"/>
</dbReference>
<dbReference type="NCBIfam" id="NF001369">
    <property type="entry name" value="PRK00278.1-1"/>
    <property type="match status" value="1"/>
</dbReference>
<dbReference type="NCBIfam" id="NF001377">
    <property type="entry name" value="PRK00278.2-4"/>
    <property type="match status" value="1"/>
</dbReference>
<dbReference type="PANTHER" id="PTHR22854:SF2">
    <property type="entry name" value="INDOLE-3-GLYCEROL-PHOSPHATE SYNTHASE"/>
    <property type="match status" value="1"/>
</dbReference>
<dbReference type="PANTHER" id="PTHR22854">
    <property type="entry name" value="TRYPTOPHAN BIOSYNTHESIS PROTEIN"/>
    <property type="match status" value="1"/>
</dbReference>
<dbReference type="Pfam" id="PF00218">
    <property type="entry name" value="IGPS"/>
    <property type="match status" value="1"/>
</dbReference>
<dbReference type="SUPFAM" id="SSF51366">
    <property type="entry name" value="Ribulose-phoshate binding barrel"/>
    <property type="match status" value="1"/>
</dbReference>
<dbReference type="PROSITE" id="PS00614">
    <property type="entry name" value="IGPS"/>
    <property type="match status" value="1"/>
</dbReference>
<accession>C1AT55</accession>
<gene>
    <name evidence="1" type="primary">trpC</name>
    <name type="ordered locus">ROP_07400</name>
</gene>
<keyword id="KW-0028">Amino-acid biosynthesis</keyword>
<keyword id="KW-0057">Aromatic amino acid biosynthesis</keyword>
<keyword id="KW-0210">Decarboxylase</keyword>
<keyword id="KW-0456">Lyase</keyword>
<keyword id="KW-0822">Tryptophan biosynthesis</keyword>
<feature type="chain" id="PRO_1000198785" description="Indole-3-glycerol phosphate synthase">
    <location>
        <begin position="1"/>
        <end position="269"/>
    </location>
</feature>